<protein>
    <recommendedName>
        <fullName>Methylsterol monooxygenase 1</fullName>
        <ecNumber evidence="2">1.14.18.9</ecNumber>
    </recommendedName>
    <alternativeName>
        <fullName>C-4 methylsterol oxidase</fullName>
    </alternativeName>
    <alternativeName>
        <fullName>Sterol-C4-methyl oxidase</fullName>
    </alternativeName>
</protein>
<reference key="1">
    <citation type="submission" date="2004-11" db="EMBL/GenBank/DDBJ databases">
        <authorList>
            <consortium name="The German cDNA consortium"/>
        </authorList>
    </citation>
    <scope>NUCLEOTIDE SEQUENCE [LARGE SCALE MRNA]</scope>
    <source>
        <tissue>Brain cortex</tissue>
    </source>
</reference>
<feature type="chain" id="PRO_0000117035" description="Methylsterol monooxygenase 1">
    <location>
        <begin position="1"/>
        <end position="293"/>
    </location>
</feature>
<feature type="transmembrane region" description="Helical" evidence="4">
    <location>
        <begin position="55"/>
        <end position="75"/>
    </location>
</feature>
<feature type="transmembrane region" description="Helical" evidence="4">
    <location>
        <begin position="100"/>
        <end position="120"/>
    </location>
</feature>
<feature type="transmembrane region" description="Helical" evidence="4">
    <location>
        <begin position="199"/>
        <end position="219"/>
    </location>
</feature>
<feature type="domain" description="Fatty acid hydroxylase" evidence="4">
    <location>
        <begin position="145"/>
        <end position="274"/>
    </location>
</feature>
<feature type="short sequence motif" description="Histidine box-1" evidence="1">
    <location>
        <begin position="157"/>
        <end position="161"/>
    </location>
</feature>
<feature type="short sequence motif" description="Histidine box-2" evidence="1">
    <location>
        <begin position="170"/>
        <end position="174"/>
    </location>
</feature>
<feature type="short sequence motif" description="Histidine box-3" evidence="1">
    <location>
        <begin position="249"/>
        <end position="255"/>
    </location>
</feature>
<comment type="function">
    <text evidence="3">Catalyzes the three-step monooxygenation required for the demethylation of 4,4-dimethyl and 4alpha-methylsterols, which can be subsequently metabolized to cholesterol.</text>
</comment>
<comment type="catalytic activity">
    <reaction evidence="2">
        <text>4,4-dimethyl-5alpha-cholest-7-en-3beta-ol + 6 Fe(II)-[cytochrome b5] + 3 O2 + 5 H(+) = 4alpha-carboxy-4beta-methyl-5alpha-cholest-7-ene-3beta-ol + 6 Fe(III)-[cytochrome b5] + 4 H2O</text>
        <dbReference type="Rhea" id="RHEA:55220"/>
        <dbReference type="Rhea" id="RHEA-COMP:10438"/>
        <dbReference type="Rhea" id="RHEA-COMP:10439"/>
        <dbReference type="ChEBI" id="CHEBI:15377"/>
        <dbReference type="ChEBI" id="CHEBI:15378"/>
        <dbReference type="ChEBI" id="CHEBI:15379"/>
        <dbReference type="ChEBI" id="CHEBI:16455"/>
        <dbReference type="ChEBI" id="CHEBI:29033"/>
        <dbReference type="ChEBI" id="CHEBI:29034"/>
        <dbReference type="ChEBI" id="CHEBI:58387"/>
        <dbReference type="EC" id="1.14.18.9"/>
    </reaction>
    <physiologicalReaction direction="left-to-right" evidence="2">
        <dbReference type="Rhea" id="RHEA:55221"/>
    </physiologicalReaction>
</comment>
<comment type="catalytic activity">
    <reaction evidence="3">
        <text>4,4-dimethyl-5alpha-cholesta-8,24-dien-3beta-ol + 6 Fe(II)-[cytochrome b5] + 3 O2 + 5 H(+) = 4beta-methylzymosterol-4alpha-carboxylate + 6 Fe(III)-[cytochrome b5] + 4 H2O</text>
        <dbReference type="Rhea" id="RHEA:55244"/>
        <dbReference type="Rhea" id="RHEA-COMP:10438"/>
        <dbReference type="Rhea" id="RHEA-COMP:10439"/>
        <dbReference type="ChEBI" id="CHEBI:15377"/>
        <dbReference type="ChEBI" id="CHEBI:15378"/>
        <dbReference type="ChEBI" id="CHEBI:15379"/>
        <dbReference type="ChEBI" id="CHEBI:18364"/>
        <dbReference type="ChEBI" id="CHEBI:29033"/>
        <dbReference type="ChEBI" id="CHEBI:29034"/>
        <dbReference type="ChEBI" id="CHEBI:64925"/>
    </reaction>
    <physiologicalReaction direction="left-to-right" evidence="3">
        <dbReference type="Rhea" id="RHEA:55245"/>
    </physiologicalReaction>
</comment>
<comment type="catalytic activity">
    <reaction evidence="3">
        <text>4alpha-methylzymosterol + 6 Fe(II)-[cytochrome b5] + 3 O2 + 5 H(+) = 4alpha-carboxyzymosterol + 6 Fe(III)-[cytochrome b5] + 4 H2O</text>
        <dbReference type="Rhea" id="RHEA:47056"/>
        <dbReference type="Rhea" id="RHEA-COMP:10438"/>
        <dbReference type="Rhea" id="RHEA-COMP:10439"/>
        <dbReference type="ChEBI" id="CHEBI:1949"/>
        <dbReference type="ChEBI" id="CHEBI:15377"/>
        <dbReference type="ChEBI" id="CHEBI:15378"/>
        <dbReference type="ChEBI" id="CHEBI:15379"/>
        <dbReference type="ChEBI" id="CHEBI:29033"/>
        <dbReference type="ChEBI" id="CHEBI:29034"/>
        <dbReference type="ChEBI" id="CHEBI:143575"/>
    </reaction>
    <physiologicalReaction direction="left-to-right" evidence="3">
        <dbReference type="Rhea" id="RHEA:47057"/>
    </physiologicalReaction>
</comment>
<comment type="catalytic activity">
    <reaction evidence="3">
        <text>4alpha-methyl-5alpha-cholest-7-en-3beta-ol + 6 Fe(II)-[cytochrome b5] + 3 O2 + 5 H(+) = 4alpha-carboxy-5alpha-cholest-7-en-3beta-ol + 6 Fe(III)-[cytochrome b5] + 4 H2O</text>
        <dbReference type="Rhea" id="RHEA:62768"/>
        <dbReference type="Rhea" id="RHEA-COMP:10438"/>
        <dbReference type="Rhea" id="RHEA-COMP:10439"/>
        <dbReference type="ChEBI" id="CHEBI:15377"/>
        <dbReference type="ChEBI" id="CHEBI:15378"/>
        <dbReference type="ChEBI" id="CHEBI:15379"/>
        <dbReference type="ChEBI" id="CHEBI:18378"/>
        <dbReference type="ChEBI" id="CHEBI:29033"/>
        <dbReference type="ChEBI" id="CHEBI:29034"/>
        <dbReference type="ChEBI" id="CHEBI:145943"/>
    </reaction>
    <physiologicalReaction direction="left-to-right" evidence="3">
        <dbReference type="Rhea" id="RHEA:62769"/>
    </physiologicalReaction>
</comment>
<comment type="catalytic activity">
    <reaction evidence="3">
        <text>4,4-dimethyl-5alpha-cholest-8-en-3beta-ol + 6 Fe(II)-[cytochrome b5] + 3 O2 + 5 H(+) = 4alpha-carboxy-4beta-methyl-5alpha-cholest-8-en-3beta-ol + 6 Fe(III)-[cytochrome b5] + 4 H2O</text>
        <dbReference type="Rhea" id="RHEA:62776"/>
        <dbReference type="Rhea" id="RHEA-COMP:10438"/>
        <dbReference type="Rhea" id="RHEA-COMP:10439"/>
        <dbReference type="ChEBI" id="CHEBI:15377"/>
        <dbReference type="ChEBI" id="CHEBI:15378"/>
        <dbReference type="ChEBI" id="CHEBI:15379"/>
        <dbReference type="ChEBI" id="CHEBI:29033"/>
        <dbReference type="ChEBI" id="CHEBI:29034"/>
        <dbReference type="ChEBI" id="CHEBI:87044"/>
        <dbReference type="ChEBI" id="CHEBI:87047"/>
    </reaction>
    <physiologicalReaction direction="left-to-right" evidence="3">
        <dbReference type="Rhea" id="RHEA:62777"/>
    </physiologicalReaction>
</comment>
<comment type="catalytic activity">
    <reaction evidence="3">
        <text>4alpha-methyl-5alpha-cholest-8-en-3beta-ol + 6 Fe(II)-[cytochrome b5] + 3 O2 + 5 H(+) = 4alpha-carboxy-5alpha-cholest-8-ene-3beta-ol + 6 Fe(III)-[cytochrome b5] + 4 H2O</text>
        <dbReference type="Rhea" id="RHEA:62780"/>
        <dbReference type="Rhea" id="RHEA-COMP:10438"/>
        <dbReference type="Rhea" id="RHEA-COMP:10439"/>
        <dbReference type="ChEBI" id="CHEBI:15377"/>
        <dbReference type="ChEBI" id="CHEBI:15378"/>
        <dbReference type="ChEBI" id="CHEBI:15379"/>
        <dbReference type="ChEBI" id="CHEBI:29033"/>
        <dbReference type="ChEBI" id="CHEBI:29034"/>
        <dbReference type="ChEBI" id="CHEBI:87051"/>
        <dbReference type="ChEBI" id="CHEBI:87055"/>
    </reaction>
    <physiologicalReaction direction="left-to-right" evidence="3">
        <dbReference type="Rhea" id="RHEA:62781"/>
    </physiologicalReaction>
</comment>
<comment type="cofactor">
    <cofactor evidence="3">
        <name>Fe cation</name>
        <dbReference type="ChEBI" id="CHEBI:24875"/>
    </cofactor>
</comment>
<comment type="pathway">
    <text evidence="3">Steroid biosynthesis; zymosterol biosynthesis; zymosterol from lanosterol: step 3/6.</text>
</comment>
<comment type="pathway">
    <text evidence="3">Steroid biosynthesis; cholesterol biosynthesis.</text>
</comment>
<comment type="subcellular location">
    <subcellularLocation>
        <location evidence="3">Endoplasmic reticulum membrane</location>
        <topology evidence="3">Multi-pass membrane protein</topology>
    </subcellularLocation>
</comment>
<comment type="domain">
    <text evidence="3">The histidine box domains may contain the active site and/or be involved in metal ion binding.</text>
</comment>
<comment type="PTM">
    <text evidence="3">Ubiquitinated by MARCHF6, leading to proteasomal degradation.</text>
</comment>
<comment type="similarity">
    <text evidence="5">Belongs to the sterol desaturase family.</text>
</comment>
<accession>Q5R574</accession>
<proteinExistence type="evidence at transcript level"/>
<gene>
    <name type="primary">MSMO1</name>
    <name type="synonym">SC4MOL</name>
</gene>
<dbReference type="EC" id="1.14.18.9" evidence="2"/>
<dbReference type="EMBL" id="CR860990">
    <property type="protein sequence ID" value="CAH93092.1"/>
    <property type="molecule type" value="mRNA"/>
</dbReference>
<dbReference type="RefSeq" id="NP_001126831.1">
    <property type="nucleotide sequence ID" value="NM_001133359.1"/>
</dbReference>
<dbReference type="RefSeq" id="XP_009238699.1">
    <property type="nucleotide sequence ID" value="XM_009240424.4"/>
</dbReference>
<dbReference type="RefSeq" id="XP_009238700.1">
    <property type="nucleotide sequence ID" value="XM_009240425.1"/>
</dbReference>
<dbReference type="FunCoup" id="Q5R574">
    <property type="interactions" value="823"/>
</dbReference>
<dbReference type="STRING" id="9601.ENSPPYP00000016960"/>
<dbReference type="Ensembl" id="ENSPPYT00000017646.3">
    <property type="protein sequence ID" value="ENSPPYP00000016960.2"/>
    <property type="gene ID" value="ENSPPYG00000015178.3"/>
</dbReference>
<dbReference type="GeneID" id="100173838"/>
<dbReference type="KEGG" id="pon:100173838"/>
<dbReference type="CTD" id="6307"/>
<dbReference type="eggNOG" id="KOG0873">
    <property type="taxonomic scope" value="Eukaryota"/>
</dbReference>
<dbReference type="GeneTree" id="ENSGT00940000158012"/>
<dbReference type="HOGENOM" id="CLU_047036_5_2_1"/>
<dbReference type="InParanoid" id="Q5R574"/>
<dbReference type="OMA" id="IVHEFIY"/>
<dbReference type="OrthoDB" id="1658724at2759"/>
<dbReference type="TreeFam" id="TF354294"/>
<dbReference type="UniPathway" id="UPA00063"/>
<dbReference type="UniPathway" id="UPA00770">
    <property type="reaction ID" value="UER00756"/>
</dbReference>
<dbReference type="Proteomes" id="UP000001595">
    <property type="component" value="Chromosome 4"/>
</dbReference>
<dbReference type="GO" id="GO:0005789">
    <property type="term" value="C:endoplasmic reticulum membrane"/>
    <property type="evidence" value="ECO:0007669"/>
    <property type="project" value="UniProtKB-SubCell"/>
</dbReference>
<dbReference type="GO" id="GO:0000254">
    <property type="term" value="F:C-4 methylsterol oxidase activity"/>
    <property type="evidence" value="ECO:0007669"/>
    <property type="project" value="UniProtKB-EC"/>
</dbReference>
<dbReference type="GO" id="GO:0005506">
    <property type="term" value="F:iron ion binding"/>
    <property type="evidence" value="ECO:0007669"/>
    <property type="project" value="InterPro"/>
</dbReference>
<dbReference type="GO" id="GO:0006695">
    <property type="term" value="P:cholesterol biosynthetic process"/>
    <property type="evidence" value="ECO:0007669"/>
    <property type="project" value="UniProtKB-UniPathway"/>
</dbReference>
<dbReference type="InterPro" id="IPR006694">
    <property type="entry name" value="Fatty_acid_hydroxylase"/>
</dbReference>
<dbReference type="InterPro" id="IPR050307">
    <property type="entry name" value="Sterol_Desaturase_Related"/>
</dbReference>
<dbReference type="PANTHER" id="PTHR11863">
    <property type="entry name" value="STEROL DESATURASE"/>
    <property type="match status" value="1"/>
</dbReference>
<dbReference type="Pfam" id="PF04116">
    <property type="entry name" value="FA_hydroxylase"/>
    <property type="match status" value="1"/>
</dbReference>
<evidence type="ECO:0000250" key="1"/>
<evidence type="ECO:0000250" key="2">
    <source>
        <dbReference type="UniProtKB" id="O35532"/>
    </source>
</evidence>
<evidence type="ECO:0000250" key="3">
    <source>
        <dbReference type="UniProtKB" id="Q15800"/>
    </source>
</evidence>
<evidence type="ECO:0000255" key="4"/>
<evidence type="ECO:0000305" key="5"/>
<organism>
    <name type="scientific">Pongo abelii</name>
    <name type="common">Sumatran orangutan</name>
    <name type="synonym">Pongo pygmaeus abelii</name>
    <dbReference type="NCBI Taxonomy" id="9601"/>
    <lineage>
        <taxon>Eukaryota</taxon>
        <taxon>Metazoa</taxon>
        <taxon>Chordata</taxon>
        <taxon>Craniata</taxon>
        <taxon>Vertebrata</taxon>
        <taxon>Euteleostomi</taxon>
        <taxon>Mammalia</taxon>
        <taxon>Eutheria</taxon>
        <taxon>Euarchontoglires</taxon>
        <taxon>Primates</taxon>
        <taxon>Haplorrhini</taxon>
        <taxon>Catarrhini</taxon>
        <taxon>Hominidae</taxon>
        <taxon>Pongo</taxon>
    </lineage>
</organism>
<name>MSMO1_PONAB</name>
<keyword id="KW-0152">Cholesterol biosynthesis</keyword>
<keyword id="KW-0153">Cholesterol metabolism</keyword>
<keyword id="KW-0256">Endoplasmic reticulum</keyword>
<keyword id="KW-0408">Iron</keyword>
<keyword id="KW-0444">Lipid biosynthesis</keyword>
<keyword id="KW-0443">Lipid metabolism</keyword>
<keyword id="KW-0472">Membrane</keyword>
<keyword id="KW-0520">NAD</keyword>
<keyword id="KW-0560">Oxidoreductase</keyword>
<keyword id="KW-1185">Reference proteome</keyword>
<keyword id="KW-0752">Steroid biosynthesis</keyword>
<keyword id="KW-0753">Steroid metabolism</keyword>
<keyword id="KW-0756">Sterol biosynthesis</keyword>
<keyword id="KW-1207">Sterol metabolism</keyword>
<keyword id="KW-0812">Transmembrane</keyword>
<keyword id="KW-1133">Transmembrane helix</keyword>
<keyword id="KW-0832">Ubl conjugation</keyword>
<sequence length="293" mass="35216">MATNESVSIFSSASLAVEYVDSLLPENPLQEPFKNAWNYMLNNYTKFQIATWGSLIVHEALYFLFCLPGFLFQFIPYMKKYKIQKDKPETWENQWKCFKVLLFNHFCIQLPLICGTYYFTEYFNIPYDWERMPRWYFLLARCFGCAVIEDTWHYFLHRLLHHKRIYKYIHKVHHEFQAPFGMEAEYAHPLETLILGTGFFIGIVLLCDHVILLWAWVTIRLLETIDVHSGYDIPLNPLNLIPFYAGSRHHDFHHMNFIGNYASTFTWWDRIFGTDSQYNAYNEKRKKFEKKTE</sequence>